<name>RL221_ARATH</name>
<sequence>MARVGAKSSGAGAKKKGVSFVIDCSKPVDDTILEIATLEKFLQERIKVRGKAGALGNSVSITRYNGKINVNANSNFSKRYLKYLTKKYLKKYNLRDWLRVIASNKDKNVYEVRYFRIDDEVASYEED</sequence>
<feature type="chain" id="PRO_0000215510" description="Large ribosomal subunit protein eL22x">
    <location>
        <begin position="1"/>
        <end position="127"/>
    </location>
</feature>
<reference key="1">
    <citation type="journal article" date="2000" name="Nature">
        <title>Sequence and analysis of chromosome 1 of the plant Arabidopsis thaliana.</title>
        <authorList>
            <person name="Theologis A."/>
            <person name="Ecker J.R."/>
            <person name="Palm C.J."/>
            <person name="Federspiel N.A."/>
            <person name="Kaul S."/>
            <person name="White O."/>
            <person name="Alonso J."/>
            <person name="Altafi H."/>
            <person name="Araujo R."/>
            <person name="Bowman C.L."/>
            <person name="Brooks S.Y."/>
            <person name="Buehler E."/>
            <person name="Chan A."/>
            <person name="Chao Q."/>
            <person name="Chen H."/>
            <person name="Cheuk R.F."/>
            <person name="Chin C.W."/>
            <person name="Chung M.K."/>
            <person name="Conn L."/>
            <person name="Conway A.B."/>
            <person name="Conway A.R."/>
            <person name="Creasy T.H."/>
            <person name="Dewar K."/>
            <person name="Dunn P."/>
            <person name="Etgu P."/>
            <person name="Feldblyum T.V."/>
            <person name="Feng J.-D."/>
            <person name="Fong B."/>
            <person name="Fujii C.Y."/>
            <person name="Gill J.E."/>
            <person name="Goldsmith A.D."/>
            <person name="Haas B."/>
            <person name="Hansen N.F."/>
            <person name="Hughes B."/>
            <person name="Huizar L."/>
            <person name="Hunter J.L."/>
            <person name="Jenkins J."/>
            <person name="Johnson-Hopson C."/>
            <person name="Khan S."/>
            <person name="Khaykin E."/>
            <person name="Kim C.J."/>
            <person name="Koo H.L."/>
            <person name="Kremenetskaia I."/>
            <person name="Kurtz D.B."/>
            <person name="Kwan A."/>
            <person name="Lam B."/>
            <person name="Langin-Hooper S."/>
            <person name="Lee A."/>
            <person name="Lee J.M."/>
            <person name="Lenz C.A."/>
            <person name="Li J.H."/>
            <person name="Li Y.-P."/>
            <person name="Lin X."/>
            <person name="Liu S.X."/>
            <person name="Liu Z.A."/>
            <person name="Luros J.S."/>
            <person name="Maiti R."/>
            <person name="Marziali A."/>
            <person name="Militscher J."/>
            <person name="Miranda M."/>
            <person name="Nguyen M."/>
            <person name="Nierman W.C."/>
            <person name="Osborne B.I."/>
            <person name="Pai G."/>
            <person name="Peterson J."/>
            <person name="Pham P.K."/>
            <person name="Rizzo M."/>
            <person name="Rooney T."/>
            <person name="Rowley D."/>
            <person name="Sakano H."/>
            <person name="Salzberg S.L."/>
            <person name="Schwartz J.R."/>
            <person name="Shinn P."/>
            <person name="Southwick A.M."/>
            <person name="Sun H."/>
            <person name="Tallon L.J."/>
            <person name="Tambunga G."/>
            <person name="Toriumi M.J."/>
            <person name="Town C.D."/>
            <person name="Utterback T."/>
            <person name="Van Aken S."/>
            <person name="Vaysberg M."/>
            <person name="Vysotskaia V.S."/>
            <person name="Walker M."/>
            <person name="Wu D."/>
            <person name="Yu G."/>
            <person name="Fraser C.M."/>
            <person name="Venter J.C."/>
            <person name="Davis R.W."/>
        </authorList>
    </citation>
    <scope>NUCLEOTIDE SEQUENCE [LARGE SCALE GENOMIC DNA]</scope>
    <source>
        <strain>cv. Columbia</strain>
    </source>
</reference>
<reference key="2">
    <citation type="journal article" date="2017" name="Plant J.">
        <title>Araport11: a complete reannotation of the Arabidopsis thaliana reference genome.</title>
        <authorList>
            <person name="Cheng C.Y."/>
            <person name="Krishnakumar V."/>
            <person name="Chan A.P."/>
            <person name="Thibaud-Nissen F."/>
            <person name="Schobel S."/>
            <person name="Town C.D."/>
        </authorList>
    </citation>
    <scope>GENOME REANNOTATION</scope>
    <source>
        <strain>cv. Columbia</strain>
    </source>
</reference>
<reference key="3">
    <citation type="journal article" date="2001" name="Plant Physiol.">
        <title>The organization of cytoplasmic ribosomal protein genes in the Arabidopsis genome.</title>
        <authorList>
            <person name="Barakat A."/>
            <person name="Szick-Miranda K."/>
            <person name="Chang I.-F."/>
            <person name="Guyot R."/>
            <person name="Blanc G."/>
            <person name="Cooke R."/>
            <person name="Delseny M."/>
            <person name="Bailey-Serres J."/>
        </authorList>
    </citation>
    <scope>GENE FAMILY ORGANIZATION</scope>
    <scope>NOMENCLATURE</scope>
</reference>
<reference key="4">
    <citation type="journal article" date="2023" name="Plant Cell">
        <title>An updated nomenclature for plant ribosomal protein genes.</title>
        <authorList>
            <person name="Scarpin M.R."/>
            <person name="Busche M."/>
            <person name="Martinez R.E."/>
            <person name="Harper L.C."/>
            <person name="Reiser L."/>
            <person name="Szakonyi D."/>
            <person name="Merchante C."/>
            <person name="Lan T."/>
            <person name="Xiong W."/>
            <person name="Mo B."/>
            <person name="Tang G."/>
            <person name="Chen X."/>
            <person name="Bailey-Serres J."/>
            <person name="Browning K.S."/>
            <person name="Brunkard J.O."/>
        </authorList>
    </citation>
    <scope>NOMENCLATURE</scope>
</reference>
<proteinExistence type="inferred from homology"/>
<evidence type="ECO:0000303" key="1">
    <source>
    </source>
</evidence>
<evidence type="ECO:0000305" key="2"/>
<keyword id="KW-1185">Reference proteome</keyword>
<keyword id="KW-0687">Ribonucleoprotein</keyword>
<keyword id="KW-0689">Ribosomal protein</keyword>
<gene>
    <name type="primary">RPL22A</name>
    <name type="ordered locus">At1g02830</name>
    <name type="ORF">F22D16.17</name>
</gene>
<comment type="similarity">
    <text evidence="2">Belongs to the eukaryotic ribosomal protein eL22 family.</text>
</comment>
<organism>
    <name type="scientific">Arabidopsis thaliana</name>
    <name type="common">Mouse-ear cress</name>
    <dbReference type="NCBI Taxonomy" id="3702"/>
    <lineage>
        <taxon>Eukaryota</taxon>
        <taxon>Viridiplantae</taxon>
        <taxon>Streptophyta</taxon>
        <taxon>Embryophyta</taxon>
        <taxon>Tracheophyta</taxon>
        <taxon>Spermatophyta</taxon>
        <taxon>Magnoliopsida</taxon>
        <taxon>eudicotyledons</taxon>
        <taxon>Gunneridae</taxon>
        <taxon>Pentapetalae</taxon>
        <taxon>rosids</taxon>
        <taxon>malvids</taxon>
        <taxon>Brassicales</taxon>
        <taxon>Brassicaceae</taxon>
        <taxon>Camelineae</taxon>
        <taxon>Arabidopsis</taxon>
    </lineage>
</organism>
<protein>
    <recommendedName>
        <fullName evidence="1">Large ribosomal subunit protein eL22x</fullName>
    </recommendedName>
    <alternativeName>
        <fullName>Putative 60S ribosomal protein L22-1</fullName>
    </alternativeName>
</protein>
<dbReference type="EMBL" id="AC009525">
    <property type="protein sequence ID" value="AAF02883.1"/>
    <property type="molecule type" value="Genomic_DNA"/>
</dbReference>
<dbReference type="EMBL" id="CP002684">
    <property type="protein sequence ID" value="AEE27476.1"/>
    <property type="molecule type" value="Genomic_DNA"/>
</dbReference>
<dbReference type="PIR" id="E86158">
    <property type="entry name" value="E86158"/>
</dbReference>
<dbReference type="RefSeq" id="NP_171782.1">
    <property type="nucleotide sequence ID" value="NM_100164.2"/>
</dbReference>
<dbReference type="SMR" id="Q9SRX7"/>
<dbReference type="BioGRID" id="23338">
    <property type="interactions" value="141"/>
</dbReference>
<dbReference type="FunCoup" id="Q9SRX7">
    <property type="interactions" value="2188"/>
</dbReference>
<dbReference type="STRING" id="3702.Q9SRX7"/>
<dbReference type="PaxDb" id="3702-AT1G02830.1"/>
<dbReference type="ProteomicsDB" id="226001"/>
<dbReference type="EnsemblPlants" id="AT1G02830.1">
    <property type="protein sequence ID" value="AT1G02830.1"/>
    <property type="gene ID" value="AT1G02830"/>
</dbReference>
<dbReference type="GeneID" id="838098"/>
<dbReference type="Gramene" id="AT1G02830.1">
    <property type="protein sequence ID" value="AT1G02830.1"/>
    <property type="gene ID" value="AT1G02830"/>
</dbReference>
<dbReference type="KEGG" id="ath:AT1G02830"/>
<dbReference type="Araport" id="AT1G02830"/>
<dbReference type="TAIR" id="AT1G02830"/>
<dbReference type="eggNOG" id="KOG3434">
    <property type="taxonomic scope" value="Eukaryota"/>
</dbReference>
<dbReference type="HOGENOM" id="CLU_105624_0_1_1"/>
<dbReference type="InParanoid" id="Q9SRX7"/>
<dbReference type="OMA" id="VYEVRYF"/>
<dbReference type="OrthoDB" id="10259820at2759"/>
<dbReference type="PhylomeDB" id="Q9SRX7"/>
<dbReference type="PRO" id="PR:Q9SRX7"/>
<dbReference type="Proteomes" id="UP000006548">
    <property type="component" value="Chromosome 1"/>
</dbReference>
<dbReference type="ExpressionAtlas" id="Q9SRX7">
    <property type="expression patterns" value="baseline and differential"/>
</dbReference>
<dbReference type="GO" id="GO:0022625">
    <property type="term" value="C:cytosolic large ribosomal subunit"/>
    <property type="evidence" value="ECO:0007005"/>
    <property type="project" value="TAIR"/>
</dbReference>
<dbReference type="GO" id="GO:0003735">
    <property type="term" value="F:structural constituent of ribosome"/>
    <property type="evidence" value="ECO:0000314"/>
    <property type="project" value="CAFA"/>
</dbReference>
<dbReference type="GO" id="GO:0006412">
    <property type="term" value="P:translation"/>
    <property type="evidence" value="ECO:0007669"/>
    <property type="project" value="InterPro"/>
</dbReference>
<dbReference type="FunFam" id="3.30.1360.210:FF:000002">
    <property type="entry name" value="60S ribosomal protein L22-2"/>
    <property type="match status" value="1"/>
</dbReference>
<dbReference type="Gene3D" id="3.30.1360.210">
    <property type="match status" value="1"/>
</dbReference>
<dbReference type="InterPro" id="IPR002671">
    <property type="entry name" value="Ribosomal_eL22"/>
</dbReference>
<dbReference type="InterPro" id="IPR038526">
    <property type="entry name" value="Ribosomal_eL22_sf"/>
</dbReference>
<dbReference type="PANTHER" id="PTHR10064">
    <property type="entry name" value="60S RIBOSOMAL PROTEIN L22"/>
    <property type="match status" value="1"/>
</dbReference>
<dbReference type="PANTHER" id="PTHR10064:SF20">
    <property type="entry name" value="LARGE RIBOSOMAL SUBUNIT PROTEIN EL22X"/>
    <property type="match status" value="1"/>
</dbReference>
<dbReference type="Pfam" id="PF01776">
    <property type="entry name" value="Ribosomal_L22e"/>
    <property type="match status" value="1"/>
</dbReference>
<accession>Q9SRX7</accession>